<evidence type="ECO:0000255" key="1"/>
<evidence type="ECO:0000255" key="2">
    <source>
        <dbReference type="PROSITE-ProRule" id="PRU00703"/>
    </source>
</evidence>
<evidence type="ECO:0000255" key="3">
    <source>
        <dbReference type="PROSITE-ProRule" id="PRU01193"/>
    </source>
</evidence>
<evidence type="ECO:0000256" key="4">
    <source>
        <dbReference type="SAM" id="MobiDB-lite"/>
    </source>
</evidence>
<evidence type="ECO:0000305" key="5"/>
<evidence type="ECO:0007744" key="6">
    <source>
    </source>
</evidence>
<feature type="chain" id="PRO_0000411683" description="DUF21 domain-containing protein At4g33700">
    <location>
        <begin position="1"/>
        <end position="424"/>
    </location>
</feature>
<feature type="topological domain" description="Extracellular" evidence="1">
    <location>
        <begin position="1"/>
        <end position="11"/>
    </location>
</feature>
<feature type="transmembrane region" description="Helical" evidence="1">
    <location>
        <begin position="12"/>
        <end position="32"/>
    </location>
</feature>
<feature type="topological domain" description="Cytoplasmic" evidence="1">
    <location>
        <begin position="33"/>
        <end position="70"/>
    </location>
</feature>
<feature type="transmembrane region" description="Helical" evidence="1">
    <location>
        <begin position="71"/>
        <end position="91"/>
    </location>
</feature>
<feature type="topological domain" description="Extracellular" evidence="1">
    <location>
        <begin position="92"/>
        <end position="94"/>
    </location>
</feature>
<feature type="transmembrane region" description="Helical" evidence="1">
    <location>
        <begin position="95"/>
        <end position="115"/>
    </location>
</feature>
<feature type="topological domain" description="Cytoplasmic" evidence="1">
    <location>
        <begin position="116"/>
        <end position="136"/>
    </location>
</feature>
<feature type="transmembrane region" description="Helical" evidence="1">
    <location>
        <begin position="137"/>
        <end position="157"/>
    </location>
</feature>
<feature type="topological domain" description="Extracellular" evidence="1">
    <location>
        <begin position="158"/>
        <end position="424"/>
    </location>
</feature>
<feature type="domain" description="CNNM transmembrane" evidence="3">
    <location>
        <begin position="8"/>
        <end position="191"/>
    </location>
</feature>
<feature type="domain" description="CBS 1" evidence="2">
    <location>
        <begin position="210"/>
        <end position="271"/>
    </location>
</feature>
<feature type="domain" description="CBS 2" evidence="2">
    <location>
        <begin position="275"/>
        <end position="331"/>
    </location>
</feature>
<feature type="domain" description="CBS 3" evidence="2">
    <location>
        <begin position="355"/>
        <end position="416"/>
    </location>
</feature>
<feature type="region of interest" description="Disordered" evidence="4">
    <location>
        <begin position="321"/>
        <end position="340"/>
    </location>
</feature>
<feature type="region of interest" description="Disordered" evidence="4">
    <location>
        <begin position="355"/>
        <end position="374"/>
    </location>
</feature>
<feature type="modified residue" description="Phosphoserine" evidence="6">
    <location>
        <position position="331"/>
    </location>
</feature>
<feature type="glycosylation site" description="N-linked (GlcNAc...) asparagine" evidence="1">
    <location>
        <position position="273"/>
    </location>
</feature>
<feature type="glycosylation site" description="N-linked (GlcNAc...) asparagine" evidence="1">
    <location>
        <position position="319"/>
    </location>
</feature>
<gene>
    <name type="primary">CBSDUF6</name>
    <name type="ordered locus">At4g33700</name>
    <name type="ORF">T16L1_190</name>
</gene>
<sequence length="424" mass="47110">MAVEYVCCSPNFFIHIAVIVFLVLFAGLMSGLTLGLMSLSLVDLEVLAKSGTPEHRKYAAKILPVVKNQHLLLVTLLICNAAAMETLPIFLDGLVTAWGAILISVTLILLFGEIIPQSICSRYGLAIGATVAPFVRVLVFICLPVAWPISKLLDFLLGHRRAALFRRAELKTLVDFHGNEAGKGGELTHDETTIIAGALELSEKMVKDAMTPISDIFVIDINAKLDRDLMNLILEKGHSRVPVYYEQPTNIIGLVLVKNLLTINPDEEIPVKNVTIRRIPRVPEILPLYDILNEFQKGLSHMAVVVRQCDKIHPLPSKNGSVKEARVDVDSEGTPTPQERMLRTKRSLQKWKSFPNRASSFKGGSKSKKWSKDNDADILQLNGNPLPKLAEEEEAVGIITMEDVIEELLQEEIFDETDHHFEDS</sequence>
<organism>
    <name type="scientific">Arabidopsis thaliana</name>
    <name type="common">Mouse-ear cress</name>
    <dbReference type="NCBI Taxonomy" id="3702"/>
    <lineage>
        <taxon>Eukaryota</taxon>
        <taxon>Viridiplantae</taxon>
        <taxon>Streptophyta</taxon>
        <taxon>Embryophyta</taxon>
        <taxon>Tracheophyta</taxon>
        <taxon>Spermatophyta</taxon>
        <taxon>Magnoliopsida</taxon>
        <taxon>eudicotyledons</taxon>
        <taxon>Gunneridae</taxon>
        <taxon>Pentapetalae</taxon>
        <taxon>rosids</taxon>
        <taxon>malvids</taxon>
        <taxon>Brassicales</taxon>
        <taxon>Brassicaceae</taxon>
        <taxon>Camelineae</taxon>
        <taxon>Arabidopsis</taxon>
    </lineage>
</organism>
<proteinExistence type="evidence at protein level"/>
<dbReference type="EMBL" id="AL031394">
    <property type="protein sequence ID" value="CAA20583.1"/>
    <property type="status" value="ALT_SEQ"/>
    <property type="molecule type" value="Genomic_DNA"/>
</dbReference>
<dbReference type="EMBL" id="AL161584">
    <property type="protein sequence ID" value="CAB80087.1"/>
    <property type="status" value="ALT_SEQ"/>
    <property type="molecule type" value="Genomic_DNA"/>
</dbReference>
<dbReference type="EMBL" id="CP002687">
    <property type="protein sequence ID" value="AEE86267.1"/>
    <property type="molecule type" value="Genomic_DNA"/>
</dbReference>
<dbReference type="EMBL" id="AY064150">
    <property type="protein sequence ID" value="AAL36056.1"/>
    <property type="molecule type" value="mRNA"/>
</dbReference>
<dbReference type="EMBL" id="AY101524">
    <property type="protein sequence ID" value="AAM26645.1"/>
    <property type="molecule type" value="mRNA"/>
</dbReference>
<dbReference type="PIR" id="T04987">
    <property type="entry name" value="T04987"/>
</dbReference>
<dbReference type="RefSeq" id="NP_195096.2">
    <property type="nucleotide sequence ID" value="NM_119528.4"/>
</dbReference>
<dbReference type="SMR" id="Q8VZI2"/>
<dbReference type="FunCoup" id="Q8VZI2">
    <property type="interactions" value="1152"/>
</dbReference>
<dbReference type="STRING" id="3702.Q8VZI2"/>
<dbReference type="GlyCosmos" id="Q8VZI2">
    <property type="glycosylation" value="2 sites, No reported glycans"/>
</dbReference>
<dbReference type="GlyGen" id="Q8VZI2">
    <property type="glycosylation" value="2 sites"/>
</dbReference>
<dbReference type="iPTMnet" id="Q8VZI2"/>
<dbReference type="SwissPalm" id="Q8VZI2"/>
<dbReference type="PaxDb" id="3702-AT4G33700.1"/>
<dbReference type="EnsemblPlants" id="AT4G33700.1">
    <property type="protein sequence ID" value="AT4G33700.1"/>
    <property type="gene ID" value="AT4G33700"/>
</dbReference>
<dbReference type="GeneID" id="829512"/>
<dbReference type="Gramene" id="AT4G33700.1">
    <property type="protein sequence ID" value="AT4G33700.1"/>
    <property type="gene ID" value="AT4G33700"/>
</dbReference>
<dbReference type="KEGG" id="ath:AT4G33700"/>
<dbReference type="Araport" id="AT4G33700"/>
<dbReference type="TAIR" id="AT4G33700"/>
<dbReference type="eggNOG" id="KOG2118">
    <property type="taxonomic scope" value="Eukaryota"/>
</dbReference>
<dbReference type="HOGENOM" id="CLU_011310_0_0_1"/>
<dbReference type="InParanoid" id="Q8VZI2"/>
<dbReference type="OMA" id="YFIHAIW"/>
<dbReference type="OrthoDB" id="5353557at2759"/>
<dbReference type="PhylomeDB" id="Q8VZI2"/>
<dbReference type="PRO" id="PR:Q8VZI2"/>
<dbReference type="Proteomes" id="UP000006548">
    <property type="component" value="Chromosome 4"/>
</dbReference>
<dbReference type="ExpressionAtlas" id="Q8VZI2">
    <property type="expression patterns" value="baseline and differential"/>
</dbReference>
<dbReference type="GO" id="GO:0005886">
    <property type="term" value="C:plasma membrane"/>
    <property type="evidence" value="ECO:0007005"/>
    <property type="project" value="TAIR"/>
</dbReference>
<dbReference type="GO" id="GO:0010960">
    <property type="term" value="P:magnesium ion homeostasis"/>
    <property type="evidence" value="ECO:0007669"/>
    <property type="project" value="InterPro"/>
</dbReference>
<dbReference type="CDD" id="cd04590">
    <property type="entry name" value="CBS_pair_CorC_HlyC_assoc"/>
    <property type="match status" value="1"/>
</dbReference>
<dbReference type="FunFam" id="3.10.580.10:FF:000015">
    <property type="entry name" value="DUF21 domain-containing protein"/>
    <property type="match status" value="1"/>
</dbReference>
<dbReference type="Gene3D" id="3.10.580.10">
    <property type="entry name" value="CBS-domain"/>
    <property type="match status" value="2"/>
</dbReference>
<dbReference type="InterPro" id="IPR045095">
    <property type="entry name" value="ACDP"/>
</dbReference>
<dbReference type="InterPro" id="IPR000644">
    <property type="entry name" value="CBS_dom"/>
</dbReference>
<dbReference type="InterPro" id="IPR046342">
    <property type="entry name" value="CBS_dom_sf"/>
</dbReference>
<dbReference type="InterPro" id="IPR002550">
    <property type="entry name" value="CNNM"/>
</dbReference>
<dbReference type="InterPro" id="IPR044751">
    <property type="entry name" value="Ion_transp-like_CBS"/>
</dbReference>
<dbReference type="PANTHER" id="PTHR12064:SF71">
    <property type="entry name" value="CNNM TRANSMEMBRANE DOMAIN-CONTAINING PROTEIN"/>
    <property type="match status" value="1"/>
</dbReference>
<dbReference type="PANTHER" id="PTHR12064">
    <property type="entry name" value="METAL TRANSPORTER CNNM"/>
    <property type="match status" value="1"/>
</dbReference>
<dbReference type="Pfam" id="PF01595">
    <property type="entry name" value="CNNM"/>
    <property type="match status" value="1"/>
</dbReference>
<dbReference type="SUPFAM" id="SSF54631">
    <property type="entry name" value="CBS-domain pair"/>
    <property type="match status" value="1"/>
</dbReference>
<dbReference type="PROSITE" id="PS51371">
    <property type="entry name" value="CBS"/>
    <property type="match status" value="1"/>
</dbReference>
<dbReference type="PROSITE" id="PS51846">
    <property type="entry name" value="CNNM"/>
    <property type="match status" value="1"/>
</dbReference>
<protein>
    <recommendedName>
        <fullName>DUF21 domain-containing protein At4g33700</fullName>
    </recommendedName>
    <alternativeName>
        <fullName>CBS domain-containing protein CBSDUF6</fullName>
    </alternativeName>
</protein>
<accession>Q8VZI2</accession>
<accession>O81887</accession>
<name>Y4370_ARATH</name>
<comment type="subcellular location">
    <subcellularLocation>
        <location evidence="5">Membrane</location>
        <topology evidence="5">Multi-pass membrane protein</topology>
    </subcellularLocation>
</comment>
<comment type="sequence caution" evidence="5">
    <conflict type="erroneous gene model prediction">
        <sequence resource="EMBL-CDS" id="CAA20583"/>
    </conflict>
</comment>
<comment type="sequence caution" evidence="5">
    <conflict type="erroneous gene model prediction">
        <sequence resource="EMBL-CDS" id="CAB80087"/>
    </conflict>
</comment>
<keyword id="KW-0129">CBS domain</keyword>
<keyword id="KW-0325">Glycoprotein</keyword>
<keyword id="KW-0472">Membrane</keyword>
<keyword id="KW-0597">Phosphoprotein</keyword>
<keyword id="KW-1185">Reference proteome</keyword>
<keyword id="KW-0677">Repeat</keyword>
<keyword id="KW-0812">Transmembrane</keyword>
<keyword id="KW-1133">Transmembrane helix</keyword>
<reference key="1">
    <citation type="journal article" date="1999" name="Nature">
        <title>Sequence and analysis of chromosome 4 of the plant Arabidopsis thaliana.</title>
        <authorList>
            <person name="Mayer K.F.X."/>
            <person name="Schueller C."/>
            <person name="Wambutt R."/>
            <person name="Murphy G."/>
            <person name="Volckaert G."/>
            <person name="Pohl T."/>
            <person name="Duesterhoeft A."/>
            <person name="Stiekema W."/>
            <person name="Entian K.-D."/>
            <person name="Terryn N."/>
            <person name="Harris B."/>
            <person name="Ansorge W."/>
            <person name="Brandt P."/>
            <person name="Grivell L.A."/>
            <person name="Rieger M."/>
            <person name="Weichselgartner M."/>
            <person name="de Simone V."/>
            <person name="Obermaier B."/>
            <person name="Mache R."/>
            <person name="Mueller M."/>
            <person name="Kreis M."/>
            <person name="Delseny M."/>
            <person name="Puigdomenech P."/>
            <person name="Watson M."/>
            <person name="Schmidtheini T."/>
            <person name="Reichert B."/>
            <person name="Portetelle D."/>
            <person name="Perez-Alonso M."/>
            <person name="Boutry M."/>
            <person name="Bancroft I."/>
            <person name="Vos P."/>
            <person name="Hoheisel J."/>
            <person name="Zimmermann W."/>
            <person name="Wedler H."/>
            <person name="Ridley P."/>
            <person name="Langham S.-A."/>
            <person name="McCullagh B."/>
            <person name="Bilham L."/>
            <person name="Robben J."/>
            <person name="van der Schueren J."/>
            <person name="Grymonprez B."/>
            <person name="Chuang Y.-J."/>
            <person name="Vandenbussche F."/>
            <person name="Braeken M."/>
            <person name="Weltjens I."/>
            <person name="Voet M."/>
            <person name="Bastiaens I."/>
            <person name="Aert R."/>
            <person name="Defoor E."/>
            <person name="Weitzenegger T."/>
            <person name="Bothe G."/>
            <person name="Ramsperger U."/>
            <person name="Hilbert H."/>
            <person name="Braun M."/>
            <person name="Holzer E."/>
            <person name="Brandt A."/>
            <person name="Peters S."/>
            <person name="van Staveren M."/>
            <person name="Dirkse W."/>
            <person name="Mooijman P."/>
            <person name="Klein Lankhorst R."/>
            <person name="Rose M."/>
            <person name="Hauf J."/>
            <person name="Koetter P."/>
            <person name="Berneiser S."/>
            <person name="Hempel S."/>
            <person name="Feldpausch M."/>
            <person name="Lamberth S."/>
            <person name="Van den Daele H."/>
            <person name="De Keyser A."/>
            <person name="Buysshaert C."/>
            <person name="Gielen J."/>
            <person name="Villarroel R."/>
            <person name="De Clercq R."/>
            <person name="van Montagu M."/>
            <person name="Rogers J."/>
            <person name="Cronin A."/>
            <person name="Quail M.A."/>
            <person name="Bray-Allen S."/>
            <person name="Clark L."/>
            <person name="Doggett J."/>
            <person name="Hall S."/>
            <person name="Kay M."/>
            <person name="Lennard N."/>
            <person name="McLay K."/>
            <person name="Mayes R."/>
            <person name="Pettett A."/>
            <person name="Rajandream M.A."/>
            <person name="Lyne M."/>
            <person name="Benes V."/>
            <person name="Rechmann S."/>
            <person name="Borkova D."/>
            <person name="Bloecker H."/>
            <person name="Scharfe M."/>
            <person name="Grimm M."/>
            <person name="Loehnert T.-H."/>
            <person name="Dose S."/>
            <person name="de Haan M."/>
            <person name="Maarse A.C."/>
            <person name="Schaefer M."/>
            <person name="Mueller-Auer S."/>
            <person name="Gabel C."/>
            <person name="Fuchs M."/>
            <person name="Fartmann B."/>
            <person name="Granderath K."/>
            <person name="Dauner D."/>
            <person name="Herzl A."/>
            <person name="Neumann S."/>
            <person name="Argiriou A."/>
            <person name="Vitale D."/>
            <person name="Liguori R."/>
            <person name="Piravandi E."/>
            <person name="Massenet O."/>
            <person name="Quigley F."/>
            <person name="Clabauld G."/>
            <person name="Muendlein A."/>
            <person name="Felber R."/>
            <person name="Schnabl S."/>
            <person name="Hiller R."/>
            <person name="Schmidt W."/>
            <person name="Lecharny A."/>
            <person name="Aubourg S."/>
            <person name="Chefdor F."/>
            <person name="Cooke R."/>
            <person name="Berger C."/>
            <person name="Monfort A."/>
            <person name="Casacuberta E."/>
            <person name="Gibbons T."/>
            <person name="Weber N."/>
            <person name="Vandenbol M."/>
            <person name="Bargues M."/>
            <person name="Terol J."/>
            <person name="Torres A."/>
            <person name="Perez-Perez A."/>
            <person name="Purnelle B."/>
            <person name="Bent E."/>
            <person name="Johnson S."/>
            <person name="Tacon D."/>
            <person name="Jesse T."/>
            <person name="Heijnen L."/>
            <person name="Schwarz S."/>
            <person name="Scholler P."/>
            <person name="Heber S."/>
            <person name="Francs P."/>
            <person name="Bielke C."/>
            <person name="Frishman D."/>
            <person name="Haase D."/>
            <person name="Lemcke K."/>
            <person name="Mewes H.-W."/>
            <person name="Stocker S."/>
            <person name="Zaccaria P."/>
            <person name="Bevan M."/>
            <person name="Wilson R.K."/>
            <person name="de la Bastide M."/>
            <person name="Habermann K."/>
            <person name="Parnell L."/>
            <person name="Dedhia N."/>
            <person name="Gnoj L."/>
            <person name="Schutz K."/>
            <person name="Huang E."/>
            <person name="Spiegel L."/>
            <person name="Sekhon M."/>
            <person name="Murray J."/>
            <person name="Sheet P."/>
            <person name="Cordes M."/>
            <person name="Abu-Threideh J."/>
            <person name="Stoneking T."/>
            <person name="Kalicki J."/>
            <person name="Graves T."/>
            <person name="Harmon G."/>
            <person name="Edwards J."/>
            <person name="Latreille P."/>
            <person name="Courtney L."/>
            <person name="Cloud J."/>
            <person name="Abbott A."/>
            <person name="Scott K."/>
            <person name="Johnson D."/>
            <person name="Minx P."/>
            <person name="Bentley D."/>
            <person name="Fulton B."/>
            <person name="Miller N."/>
            <person name="Greco T."/>
            <person name="Kemp K."/>
            <person name="Kramer J."/>
            <person name="Fulton L."/>
            <person name="Mardis E."/>
            <person name="Dante M."/>
            <person name="Pepin K."/>
            <person name="Hillier L.W."/>
            <person name="Nelson J."/>
            <person name="Spieth J."/>
            <person name="Ryan E."/>
            <person name="Andrews S."/>
            <person name="Geisel C."/>
            <person name="Layman D."/>
            <person name="Du H."/>
            <person name="Ali J."/>
            <person name="Berghoff A."/>
            <person name="Jones K."/>
            <person name="Drone K."/>
            <person name="Cotton M."/>
            <person name="Joshu C."/>
            <person name="Antonoiu B."/>
            <person name="Zidanic M."/>
            <person name="Strong C."/>
            <person name="Sun H."/>
            <person name="Lamar B."/>
            <person name="Yordan C."/>
            <person name="Ma P."/>
            <person name="Zhong J."/>
            <person name="Preston R."/>
            <person name="Vil D."/>
            <person name="Shekher M."/>
            <person name="Matero A."/>
            <person name="Shah R."/>
            <person name="Swaby I.K."/>
            <person name="O'Shaughnessy A."/>
            <person name="Rodriguez M."/>
            <person name="Hoffman J."/>
            <person name="Till S."/>
            <person name="Granat S."/>
            <person name="Shohdy N."/>
            <person name="Hasegawa A."/>
            <person name="Hameed A."/>
            <person name="Lodhi M."/>
            <person name="Johnson A."/>
            <person name="Chen E."/>
            <person name="Marra M.A."/>
            <person name="Martienssen R."/>
            <person name="McCombie W.R."/>
        </authorList>
    </citation>
    <scope>NUCLEOTIDE SEQUENCE [LARGE SCALE GENOMIC DNA]</scope>
    <source>
        <strain>cv. Columbia</strain>
    </source>
</reference>
<reference key="2">
    <citation type="journal article" date="2017" name="Plant J.">
        <title>Araport11: a complete reannotation of the Arabidopsis thaliana reference genome.</title>
        <authorList>
            <person name="Cheng C.Y."/>
            <person name="Krishnakumar V."/>
            <person name="Chan A.P."/>
            <person name="Thibaud-Nissen F."/>
            <person name="Schobel S."/>
            <person name="Town C.D."/>
        </authorList>
    </citation>
    <scope>GENOME REANNOTATION</scope>
    <source>
        <strain>cv. Columbia</strain>
    </source>
</reference>
<reference key="3">
    <citation type="journal article" date="2003" name="Science">
        <title>Empirical analysis of transcriptional activity in the Arabidopsis genome.</title>
        <authorList>
            <person name="Yamada K."/>
            <person name="Lim J."/>
            <person name="Dale J.M."/>
            <person name="Chen H."/>
            <person name="Shinn P."/>
            <person name="Palm C.J."/>
            <person name="Southwick A.M."/>
            <person name="Wu H.C."/>
            <person name="Kim C.J."/>
            <person name="Nguyen M."/>
            <person name="Pham P.K."/>
            <person name="Cheuk R.F."/>
            <person name="Karlin-Newmann G."/>
            <person name="Liu S.X."/>
            <person name="Lam B."/>
            <person name="Sakano H."/>
            <person name="Wu T."/>
            <person name="Yu G."/>
            <person name="Miranda M."/>
            <person name="Quach H.L."/>
            <person name="Tripp M."/>
            <person name="Chang C.H."/>
            <person name="Lee J.M."/>
            <person name="Toriumi M.J."/>
            <person name="Chan M.M."/>
            <person name="Tang C.C."/>
            <person name="Onodera C.S."/>
            <person name="Deng J.M."/>
            <person name="Akiyama K."/>
            <person name="Ansari Y."/>
            <person name="Arakawa T."/>
            <person name="Banh J."/>
            <person name="Banno F."/>
            <person name="Bowser L."/>
            <person name="Brooks S.Y."/>
            <person name="Carninci P."/>
            <person name="Chao Q."/>
            <person name="Choy N."/>
            <person name="Enju A."/>
            <person name="Goldsmith A.D."/>
            <person name="Gurjal M."/>
            <person name="Hansen N.F."/>
            <person name="Hayashizaki Y."/>
            <person name="Johnson-Hopson C."/>
            <person name="Hsuan V.W."/>
            <person name="Iida K."/>
            <person name="Karnes M."/>
            <person name="Khan S."/>
            <person name="Koesema E."/>
            <person name="Ishida J."/>
            <person name="Jiang P.X."/>
            <person name="Jones T."/>
            <person name="Kawai J."/>
            <person name="Kamiya A."/>
            <person name="Meyers C."/>
            <person name="Nakajima M."/>
            <person name="Narusaka M."/>
            <person name="Seki M."/>
            <person name="Sakurai T."/>
            <person name="Satou M."/>
            <person name="Tamse R."/>
            <person name="Vaysberg M."/>
            <person name="Wallender E.K."/>
            <person name="Wong C."/>
            <person name="Yamamura Y."/>
            <person name="Yuan S."/>
            <person name="Shinozaki K."/>
            <person name="Davis R.W."/>
            <person name="Theologis A."/>
            <person name="Ecker J.R."/>
        </authorList>
    </citation>
    <scope>NUCLEOTIDE SEQUENCE [LARGE SCALE MRNA]</scope>
    <source>
        <strain>cv. Columbia</strain>
    </source>
</reference>
<reference key="4">
    <citation type="journal article" date="2003" name="Mol. Cell. Proteomics">
        <title>Large-scale analysis of in vivo phosphorylated membrane proteins by immobilized metal ion affinity chromatography and mass spectrometry.</title>
        <authorList>
            <person name="Nuehse T.S."/>
            <person name="Stensballe A."/>
            <person name="Jensen O.N."/>
            <person name="Peck S.C."/>
        </authorList>
    </citation>
    <scope>PHOSPHORYLATION [LARGE SCALE ANALYSIS] AT SER-331</scope>
    <scope>IDENTIFICATION BY MASS SPECTROMETRY [LARGE SCALE ANALYSIS]</scope>
    <source>
        <strain>cv. La-0</strain>
    </source>
</reference>
<reference key="5">
    <citation type="journal article" date="2004" name="Plant Cell">
        <title>Phosphoproteomics of the Arabidopsis plasma membrane and a new phosphorylation site database.</title>
        <authorList>
            <person name="Nuehse T.S."/>
            <person name="Stensballe A."/>
            <person name="Jensen O.N."/>
            <person name="Peck S.C."/>
        </authorList>
    </citation>
    <scope>IDENTIFICATION BY MASS SPECTROMETRY [LARGE SCALE ANALYSIS]</scope>
</reference>
<reference key="6">
    <citation type="journal article" date="2009" name="BMC Genomics">
        <title>Genome wide expression analysis of CBS domain containing proteins in Arabidopsis thaliana (L.) Heynh and Oryza sativa L. reveals their developmental and stress regulation.</title>
        <authorList>
            <person name="Kushwaha H.R."/>
            <person name="Singh A.K."/>
            <person name="Sopory S.K."/>
            <person name="Singla-Pareek S.L."/>
            <person name="Pareek A."/>
        </authorList>
    </citation>
    <scope>GENE FAMILY</scope>
    <scope>NOMENCLATURE</scope>
</reference>